<accession>Q80WC1</accession>
<accession>Q69Z27</accession>
<accession>Q80ZZ9</accession>
<accession>Q8BQ40</accession>
<accession>Q8BRI2</accession>
<protein>
    <recommendedName>
        <fullName>Ubinuclein-2</fullName>
    </recommendedName>
</protein>
<organism>
    <name type="scientific">Mus musculus</name>
    <name type="common">Mouse</name>
    <dbReference type="NCBI Taxonomy" id="10090"/>
    <lineage>
        <taxon>Eukaryota</taxon>
        <taxon>Metazoa</taxon>
        <taxon>Chordata</taxon>
        <taxon>Craniata</taxon>
        <taxon>Vertebrata</taxon>
        <taxon>Euteleostomi</taxon>
        <taxon>Mammalia</taxon>
        <taxon>Eutheria</taxon>
        <taxon>Euarchontoglires</taxon>
        <taxon>Glires</taxon>
        <taxon>Rodentia</taxon>
        <taxon>Myomorpha</taxon>
        <taxon>Muroidea</taxon>
        <taxon>Muridae</taxon>
        <taxon>Murinae</taxon>
        <taxon>Mus</taxon>
        <taxon>Mus</taxon>
    </lineage>
</organism>
<name>UBN2_MOUSE</name>
<feature type="chain" id="PRO_0000295726" description="Ubinuclein-2">
    <location>
        <begin position="1"/>
        <end position="1314"/>
    </location>
</feature>
<feature type="region of interest" description="Disordered" evidence="2">
    <location>
        <begin position="1"/>
        <end position="113"/>
    </location>
</feature>
<feature type="region of interest" description="Disordered" evidence="2">
    <location>
        <begin position="236"/>
        <end position="288"/>
    </location>
</feature>
<feature type="region of interest" description="Disordered" evidence="2">
    <location>
        <begin position="322"/>
        <end position="345"/>
    </location>
</feature>
<feature type="region of interest" description="Disordered" evidence="2">
    <location>
        <begin position="400"/>
        <end position="424"/>
    </location>
</feature>
<feature type="region of interest" description="Disordered" evidence="2">
    <location>
        <begin position="559"/>
        <end position="584"/>
    </location>
</feature>
<feature type="region of interest" description="Disordered" evidence="2">
    <location>
        <begin position="657"/>
        <end position="709"/>
    </location>
</feature>
<feature type="region of interest" description="Disordered" evidence="2">
    <location>
        <begin position="785"/>
        <end position="818"/>
    </location>
</feature>
<feature type="region of interest" description="Disordered" evidence="2">
    <location>
        <begin position="849"/>
        <end position="893"/>
    </location>
</feature>
<feature type="region of interest" description="Disordered" evidence="2">
    <location>
        <begin position="948"/>
        <end position="975"/>
    </location>
</feature>
<feature type="region of interest" description="Disordered" evidence="2">
    <location>
        <begin position="1003"/>
        <end position="1185"/>
    </location>
</feature>
<feature type="region of interest" description="Disordered" evidence="2">
    <location>
        <begin position="1288"/>
        <end position="1314"/>
    </location>
</feature>
<feature type="compositionally biased region" description="Basic and acidic residues" evidence="2">
    <location>
        <begin position="16"/>
        <end position="31"/>
    </location>
</feature>
<feature type="compositionally biased region" description="Basic and acidic residues" evidence="2">
    <location>
        <begin position="55"/>
        <end position="67"/>
    </location>
</feature>
<feature type="compositionally biased region" description="Pro residues" evidence="2">
    <location>
        <begin position="81"/>
        <end position="96"/>
    </location>
</feature>
<feature type="compositionally biased region" description="Low complexity" evidence="2">
    <location>
        <begin position="330"/>
        <end position="341"/>
    </location>
</feature>
<feature type="compositionally biased region" description="Polar residues" evidence="2">
    <location>
        <begin position="415"/>
        <end position="424"/>
    </location>
</feature>
<feature type="compositionally biased region" description="Basic and acidic residues" evidence="2">
    <location>
        <begin position="560"/>
        <end position="570"/>
    </location>
</feature>
<feature type="compositionally biased region" description="Basic and acidic residues" evidence="2">
    <location>
        <begin position="673"/>
        <end position="684"/>
    </location>
</feature>
<feature type="compositionally biased region" description="Low complexity" evidence="2">
    <location>
        <begin position="685"/>
        <end position="709"/>
    </location>
</feature>
<feature type="compositionally biased region" description="Polar residues" evidence="2">
    <location>
        <begin position="792"/>
        <end position="801"/>
    </location>
</feature>
<feature type="compositionally biased region" description="Low complexity" evidence="2">
    <location>
        <begin position="849"/>
        <end position="879"/>
    </location>
</feature>
<feature type="compositionally biased region" description="Polar residues" evidence="2">
    <location>
        <begin position="883"/>
        <end position="893"/>
    </location>
</feature>
<feature type="compositionally biased region" description="Low complexity" evidence="2">
    <location>
        <begin position="1003"/>
        <end position="1013"/>
    </location>
</feature>
<feature type="compositionally biased region" description="Pro residues" evidence="2">
    <location>
        <begin position="1014"/>
        <end position="1028"/>
    </location>
</feature>
<feature type="compositionally biased region" description="Low complexity" evidence="2">
    <location>
        <begin position="1029"/>
        <end position="1040"/>
    </location>
</feature>
<feature type="compositionally biased region" description="Polar residues" evidence="2">
    <location>
        <begin position="1057"/>
        <end position="1132"/>
    </location>
</feature>
<feature type="compositionally biased region" description="Polar residues" evidence="2">
    <location>
        <begin position="1142"/>
        <end position="1153"/>
    </location>
</feature>
<feature type="compositionally biased region" description="Basic and acidic residues" evidence="2">
    <location>
        <begin position="1305"/>
        <end position="1314"/>
    </location>
</feature>
<feature type="modified residue" description="Phosphoserine" evidence="6">
    <location>
        <position position="13"/>
    </location>
</feature>
<feature type="modified residue" description="Phosphothreonine" evidence="1">
    <location>
        <position position="229"/>
    </location>
</feature>
<feature type="modified residue" description="Phosphoserine" evidence="1">
    <location>
        <position position="236"/>
    </location>
</feature>
<feature type="modified residue" description="Phosphothreonine" evidence="1">
    <location>
        <position position="238"/>
    </location>
</feature>
<feature type="modified residue" description="Phosphoserine" evidence="1">
    <location>
        <position position="297"/>
    </location>
</feature>
<feature type="modified residue" description="Phosphoserine" evidence="6">
    <location>
        <position position="402"/>
    </location>
</feature>
<feature type="modified residue" description="Phosphoserine" evidence="6">
    <location>
        <position position="405"/>
    </location>
</feature>
<feature type="modified residue" description="Phosphoserine" evidence="6">
    <location>
        <position position="408"/>
    </location>
</feature>
<feature type="modified residue" description="Phosphoserine" evidence="1">
    <location>
        <position position="570"/>
    </location>
</feature>
<feature type="modified residue" description="N6-acetyllysine" evidence="7">
    <location>
        <position position="1036"/>
    </location>
</feature>
<feature type="modified residue" description="Phosphoserine" evidence="1">
    <location>
        <position position="1091"/>
    </location>
</feature>
<feature type="modified residue" description="N6-acetyllysine" evidence="1">
    <location>
        <position position="1116"/>
    </location>
</feature>
<feature type="cross-link" description="Glycyl lysine isopeptide (Lys-Gly) (interchain with G-Cter in SUMO2)" evidence="1">
    <location>
        <position position="258"/>
    </location>
</feature>
<feature type="splice variant" id="VSP_027023" description="In isoform 3." evidence="3">
    <original>SE</original>
    <variation>K</variation>
    <location>
        <begin position="297"/>
        <end position="298"/>
    </location>
</feature>
<feature type="splice variant" id="VSP_027024" description="In isoform 4." evidence="4">
    <original>V</original>
    <variation>VVS</variation>
    <location>
        <position position="451"/>
    </location>
</feature>
<feature type="splice variant" id="VSP_027025" description="In isoform 3." evidence="3">
    <original>V</original>
    <variation>VKAVLVKTLPVRSFPTML</variation>
    <location>
        <position position="674"/>
    </location>
</feature>
<feature type="splice variant" id="VSP_027026" description="In isoform 2." evidence="4">
    <original>STAGASLLANAS</original>
    <variation>FYQKPQRLRTKQ</variation>
    <location>
        <begin position="1192"/>
        <end position="1203"/>
    </location>
</feature>
<feature type="splice variant" id="VSP_027027" description="In isoform 3." evidence="3">
    <original>STA</original>
    <variation>PSS</variation>
    <location>
        <begin position="1192"/>
        <end position="1194"/>
    </location>
</feature>
<feature type="splice variant" id="VSP_027028" description="In isoform 3." evidence="3">
    <location>
        <begin position="1195"/>
        <end position="1314"/>
    </location>
</feature>
<feature type="splice variant" id="VSP_027029" description="In isoform 2." evidence="4">
    <location>
        <begin position="1204"/>
        <end position="1314"/>
    </location>
</feature>
<feature type="sequence conflict" description="In Ref. 2; BAC34690." evidence="5" ref="2">
    <original>P</original>
    <variation>S</variation>
    <location>
        <position position="284"/>
    </location>
</feature>
<feature type="sequence conflict" description="In Ref. 1; AAH51458." evidence="5" ref="1">
    <location>
        <position position="867"/>
    </location>
</feature>
<keyword id="KW-0007">Acetylation</keyword>
<keyword id="KW-0025">Alternative splicing</keyword>
<keyword id="KW-1017">Isopeptide bond</keyword>
<keyword id="KW-0597">Phosphoprotein</keyword>
<keyword id="KW-1185">Reference proteome</keyword>
<keyword id="KW-0832">Ubl conjugation</keyword>
<comment type="alternative products">
    <event type="alternative splicing"/>
    <isoform>
        <id>Q80WC1-1</id>
        <name>1</name>
        <sequence type="displayed"/>
    </isoform>
    <isoform>
        <id>Q80WC1-2</id>
        <name>2</name>
        <sequence type="described" ref="VSP_027026 VSP_027029"/>
    </isoform>
    <isoform>
        <id>Q80WC1-3</id>
        <name>3</name>
        <sequence type="described" ref="VSP_027023 VSP_027025 VSP_027027 VSP_027028"/>
    </isoform>
    <isoform>
        <id>Q80WC1-4</id>
        <name>4</name>
        <sequence type="described" ref="VSP_027024"/>
    </isoform>
</comment>
<comment type="similarity">
    <text evidence="5">Belongs to the ubinuclein family.</text>
</comment>
<comment type="sequence caution" evidence="5">
    <conflict type="erroneous initiation">
        <sequence resource="EMBL-CDS" id="BAC31801"/>
    </conflict>
</comment>
<proteinExistence type="evidence at protein level"/>
<evidence type="ECO:0000250" key="1">
    <source>
        <dbReference type="UniProtKB" id="Q6ZU65"/>
    </source>
</evidence>
<evidence type="ECO:0000256" key="2">
    <source>
        <dbReference type="SAM" id="MobiDB-lite"/>
    </source>
</evidence>
<evidence type="ECO:0000303" key="3">
    <source>
    </source>
</evidence>
<evidence type="ECO:0000303" key="4">
    <source>
    </source>
</evidence>
<evidence type="ECO:0000305" key="5"/>
<evidence type="ECO:0007744" key="6">
    <source>
    </source>
</evidence>
<evidence type="ECO:0007744" key="7">
    <source>
    </source>
</evidence>
<dbReference type="EMBL" id="BC043095">
    <property type="protein sequence ID" value="AAH43095.1"/>
    <property type="molecule type" value="mRNA"/>
</dbReference>
<dbReference type="EMBL" id="BC051458">
    <property type="protein sequence ID" value="AAH51458.1"/>
    <property type="molecule type" value="mRNA"/>
</dbReference>
<dbReference type="EMBL" id="AK044162">
    <property type="protein sequence ID" value="BAC31801.1"/>
    <property type="status" value="ALT_INIT"/>
    <property type="molecule type" value="mRNA"/>
</dbReference>
<dbReference type="EMBL" id="AK051609">
    <property type="protein sequence ID" value="BAC34690.1"/>
    <property type="molecule type" value="mRNA"/>
</dbReference>
<dbReference type="EMBL" id="AK173339">
    <property type="protein sequence ID" value="BAD32617.1"/>
    <property type="molecule type" value="mRNA"/>
</dbReference>
<dbReference type="CCDS" id="CCDS39461.1">
    <molecule id="Q80WC1-1"/>
</dbReference>
<dbReference type="RefSeq" id="NP_796159.3">
    <molecule id="Q80WC1-1"/>
    <property type="nucleotide sequence ID" value="NM_177185.4"/>
</dbReference>
<dbReference type="SMR" id="Q80WC1"/>
<dbReference type="BioGRID" id="236097">
    <property type="interactions" value="4"/>
</dbReference>
<dbReference type="FunCoup" id="Q80WC1">
    <property type="interactions" value="3339"/>
</dbReference>
<dbReference type="IntAct" id="Q80WC1">
    <property type="interactions" value="2"/>
</dbReference>
<dbReference type="STRING" id="10090.ENSMUSP00000124043"/>
<dbReference type="GlyGen" id="Q80WC1">
    <property type="glycosylation" value="5 sites, 1 O-linked glycan (5 sites)"/>
</dbReference>
<dbReference type="iPTMnet" id="Q80WC1"/>
<dbReference type="PhosphoSitePlus" id="Q80WC1"/>
<dbReference type="jPOST" id="Q80WC1"/>
<dbReference type="PaxDb" id="10090-ENSMUSP00000036188"/>
<dbReference type="PeptideAtlas" id="Q80WC1"/>
<dbReference type="ProteomicsDB" id="297696">
    <molecule id="Q80WC1-1"/>
</dbReference>
<dbReference type="ProteomicsDB" id="297697">
    <molecule id="Q80WC1-2"/>
</dbReference>
<dbReference type="ProteomicsDB" id="297698">
    <molecule id="Q80WC1-3"/>
</dbReference>
<dbReference type="ProteomicsDB" id="297699">
    <molecule id="Q80WC1-4"/>
</dbReference>
<dbReference type="Pumba" id="Q80WC1"/>
<dbReference type="Antibodypedia" id="9881">
    <property type="antibodies" value="90 antibodies from 21 providers"/>
</dbReference>
<dbReference type="DNASU" id="320538"/>
<dbReference type="Ensembl" id="ENSMUST00000039127.15">
    <molecule id="Q80WC1-4"/>
    <property type="protein sequence ID" value="ENSMUSP00000036188.9"/>
    <property type="gene ID" value="ENSMUSG00000038538.18"/>
</dbReference>
<dbReference type="Ensembl" id="ENSMUST00000160583.8">
    <molecule id="Q80WC1-1"/>
    <property type="protein sequence ID" value="ENSMUSP00000124043.2"/>
    <property type="gene ID" value="ENSMUSG00000038538.18"/>
</dbReference>
<dbReference type="GeneID" id="320538"/>
<dbReference type="KEGG" id="mmu:320538"/>
<dbReference type="UCSC" id="uc009bke.2">
    <molecule id="Q80WC1-1"/>
    <property type="organism name" value="mouse"/>
</dbReference>
<dbReference type="UCSC" id="uc009bkh.2">
    <molecule id="Q80WC1-4"/>
    <property type="organism name" value="mouse"/>
</dbReference>
<dbReference type="AGR" id="MGI:2444236"/>
<dbReference type="CTD" id="254048"/>
<dbReference type="MGI" id="MGI:2444236">
    <property type="gene designation" value="Ubn2"/>
</dbReference>
<dbReference type="VEuPathDB" id="HostDB:ENSMUSG00000038538"/>
<dbReference type="eggNOG" id="KOG4786">
    <property type="taxonomic scope" value="Eukaryota"/>
</dbReference>
<dbReference type="GeneTree" id="ENSGT00940000155858"/>
<dbReference type="HOGENOM" id="CLU_007400_1_0_1"/>
<dbReference type="InParanoid" id="Q80WC1"/>
<dbReference type="OMA" id="PKVKKVM"/>
<dbReference type="OrthoDB" id="86819at9989"/>
<dbReference type="PhylomeDB" id="Q80WC1"/>
<dbReference type="TreeFam" id="TF326088"/>
<dbReference type="BioGRID-ORCS" id="320538">
    <property type="hits" value="5 hits in 77 CRISPR screens"/>
</dbReference>
<dbReference type="ChiTaRS" id="Ubn2">
    <property type="organism name" value="mouse"/>
</dbReference>
<dbReference type="PRO" id="PR:Q80WC1"/>
<dbReference type="Proteomes" id="UP000000589">
    <property type="component" value="Chromosome 6"/>
</dbReference>
<dbReference type="RNAct" id="Q80WC1">
    <property type="molecule type" value="protein"/>
</dbReference>
<dbReference type="Bgee" id="ENSMUSG00000038538">
    <property type="expression patterns" value="Expressed in rostral migratory stream and 227 other cell types or tissues"/>
</dbReference>
<dbReference type="ExpressionAtlas" id="Q80WC1">
    <property type="expression patterns" value="baseline and differential"/>
</dbReference>
<dbReference type="GO" id="GO:0005654">
    <property type="term" value="C:nucleoplasm"/>
    <property type="evidence" value="ECO:0007669"/>
    <property type="project" value="Ensembl"/>
</dbReference>
<dbReference type="InterPro" id="IPR014840">
    <property type="entry name" value="HRD"/>
</dbReference>
<dbReference type="InterPro" id="IPR026947">
    <property type="entry name" value="UBN_middle_dom"/>
</dbReference>
<dbReference type="PANTHER" id="PTHR21669">
    <property type="entry name" value="CAPZ-INTERACTING PROTEIN AND RELATED PROTEINS"/>
    <property type="match status" value="1"/>
</dbReference>
<dbReference type="PANTHER" id="PTHR21669:SF10">
    <property type="entry name" value="UBINUCLEIN-2"/>
    <property type="match status" value="1"/>
</dbReference>
<dbReference type="Pfam" id="PF08729">
    <property type="entry name" value="HUN"/>
    <property type="match status" value="1"/>
</dbReference>
<dbReference type="Pfam" id="PF14075">
    <property type="entry name" value="UBN_AB"/>
    <property type="match status" value="1"/>
</dbReference>
<reference key="1">
    <citation type="journal article" date="2004" name="Genome Res.">
        <title>The status, quality, and expansion of the NIH full-length cDNA project: the Mammalian Gene Collection (MGC).</title>
        <authorList>
            <consortium name="The MGC Project Team"/>
        </authorList>
    </citation>
    <scope>NUCLEOTIDE SEQUENCE [LARGE SCALE MRNA] (ISOFORM 1)</scope>
    <scope>NUCLEOTIDE SEQUENCE [LARGE SCALE MRNA] OF 169-1313 (ISOFORM 3)</scope>
    <source>
        <tissue>Eye</tissue>
    </source>
</reference>
<reference key="2">
    <citation type="journal article" date="2005" name="Science">
        <title>The transcriptional landscape of the mammalian genome.</title>
        <authorList>
            <person name="Carninci P."/>
            <person name="Kasukawa T."/>
            <person name="Katayama S."/>
            <person name="Gough J."/>
            <person name="Frith M.C."/>
            <person name="Maeda N."/>
            <person name="Oyama R."/>
            <person name="Ravasi T."/>
            <person name="Lenhard B."/>
            <person name="Wells C."/>
            <person name="Kodzius R."/>
            <person name="Shimokawa K."/>
            <person name="Bajic V.B."/>
            <person name="Brenner S.E."/>
            <person name="Batalov S."/>
            <person name="Forrest A.R."/>
            <person name="Zavolan M."/>
            <person name="Davis M.J."/>
            <person name="Wilming L.G."/>
            <person name="Aidinis V."/>
            <person name="Allen J.E."/>
            <person name="Ambesi-Impiombato A."/>
            <person name="Apweiler R."/>
            <person name="Aturaliya R.N."/>
            <person name="Bailey T.L."/>
            <person name="Bansal M."/>
            <person name="Baxter L."/>
            <person name="Beisel K.W."/>
            <person name="Bersano T."/>
            <person name="Bono H."/>
            <person name="Chalk A.M."/>
            <person name="Chiu K.P."/>
            <person name="Choudhary V."/>
            <person name="Christoffels A."/>
            <person name="Clutterbuck D.R."/>
            <person name="Crowe M.L."/>
            <person name="Dalla E."/>
            <person name="Dalrymple B.P."/>
            <person name="de Bono B."/>
            <person name="Della Gatta G."/>
            <person name="di Bernardo D."/>
            <person name="Down T."/>
            <person name="Engstrom P."/>
            <person name="Fagiolini M."/>
            <person name="Faulkner G."/>
            <person name="Fletcher C.F."/>
            <person name="Fukushima T."/>
            <person name="Furuno M."/>
            <person name="Futaki S."/>
            <person name="Gariboldi M."/>
            <person name="Georgii-Hemming P."/>
            <person name="Gingeras T.R."/>
            <person name="Gojobori T."/>
            <person name="Green R.E."/>
            <person name="Gustincich S."/>
            <person name="Harbers M."/>
            <person name="Hayashi Y."/>
            <person name="Hensch T.K."/>
            <person name="Hirokawa N."/>
            <person name="Hill D."/>
            <person name="Huminiecki L."/>
            <person name="Iacono M."/>
            <person name="Ikeo K."/>
            <person name="Iwama A."/>
            <person name="Ishikawa T."/>
            <person name="Jakt M."/>
            <person name="Kanapin A."/>
            <person name="Katoh M."/>
            <person name="Kawasawa Y."/>
            <person name="Kelso J."/>
            <person name="Kitamura H."/>
            <person name="Kitano H."/>
            <person name="Kollias G."/>
            <person name="Krishnan S.P."/>
            <person name="Kruger A."/>
            <person name="Kummerfeld S.K."/>
            <person name="Kurochkin I.V."/>
            <person name="Lareau L.F."/>
            <person name="Lazarevic D."/>
            <person name="Lipovich L."/>
            <person name="Liu J."/>
            <person name="Liuni S."/>
            <person name="McWilliam S."/>
            <person name="Madan Babu M."/>
            <person name="Madera M."/>
            <person name="Marchionni L."/>
            <person name="Matsuda H."/>
            <person name="Matsuzawa S."/>
            <person name="Miki H."/>
            <person name="Mignone F."/>
            <person name="Miyake S."/>
            <person name="Morris K."/>
            <person name="Mottagui-Tabar S."/>
            <person name="Mulder N."/>
            <person name="Nakano N."/>
            <person name="Nakauchi H."/>
            <person name="Ng P."/>
            <person name="Nilsson R."/>
            <person name="Nishiguchi S."/>
            <person name="Nishikawa S."/>
            <person name="Nori F."/>
            <person name="Ohara O."/>
            <person name="Okazaki Y."/>
            <person name="Orlando V."/>
            <person name="Pang K.C."/>
            <person name="Pavan W.J."/>
            <person name="Pavesi G."/>
            <person name="Pesole G."/>
            <person name="Petrovsky N."/>
            <person name="Piazza S."/>
            <person name="Reed J."/>
            <person name="Reid J.F."/>
            <person name="Ring B.Z."/>
            <person name="Ringwald M."/>
            <person name="Rost B."/>
            <person name="Ruan Y."/>
            <person name="Salzberg S.L."/>
            <person name="Sandelin A."/>
            <person name="Schneider C."/>
            <person name="Schoenbach C."/>
            <person name="Sekiguchi K."/>
            <person name="Semple C.A."/>
            <person name="Seno S."/>
            <person name="Sessa L."/>
            <person name="Sheng Y."/>
            <person name="Shibata Y."/>
            <person name="Shimada H."/>
            <person name="Shimada K."/>
            <person name="Silva D."/>
            <person name="Sinclair B."/>
            <person name="Sperling S."/>
            <person name="Stupka E."/>
            <person name="Sugiura K."/>
            <person name="Sultana R."/>
            <person name="Takenaka Y."/>
            <person name="Taki K."/>
            <person name="Tammoja K."/>
            <person name="Tan S.L."/>
            <person name="Tang S."/>
            <person name="Taylor M.S."/>
            <person name="Tegner J."/>
            <person name="Teichmann S.A."/>
            <person name="Ueda H.R."/>
            <person name="van Nimwegen E."/>
            <person name="Verardo R."/>
            <person name="Wei C.L."/>
            <person name="Yagi K."/>
            <person name="Yamanishi H."/>
            <person name="Zabarovsky E."/>
            <person name="Zhu S."/>
            <person name="Zimmer A."/>
            <person name="Hide W."/>
            <person name="Bult C."/>
            <person name="Grimmond S.M."/>
            <person name="Teasdale R.D."/>
            <person name="Liu E.T."/>
            <person name="Brusic V."/>
            <person name="Quackenbush J."/>
            <person name="Wahlestedt C."/>
            <person name="Mattick J.S."/>
            <person name="Hume D.A."/>
            <person name="Kai C."/>
            <person name="Sasaki D."/>
            <person name="Tomaru Y."/>
            <person name="Fukuda S."/>
            <person name="Kanamori-Katayama M."/>
            <person name="Suzuki M."/>
            <person name="Aoki J."/>
            <person name="Arakawa T."/>
            <person name="Iida J."/>
            <person name="Imamura K."/>
            <person name="Itoh M."/>
            <person name="Kato T."/>
            <person name="Kawaji H."/>
            <person name="Kawagashira N."/>
            <person name="Kawashima T."/>
            <person name="Kojima M."/>
            <person name="Kondo S."/>
            <person name="Konno H."/>
            <person name="Nakano K."/>
            <person name="Ninomiya N."/>
            <person name="Nishio T."/>
            <person name="Okada M."/>
            <person name="Plessy C."/>
            <person name="Shibata K."/>
            <person name="Shiraki T."/>
            <person name="Suzuki S."/>
            <person name="Tagami M."/>
            <person name="Waki K."/>
            <person name="Watahiki A."/>
            <person name="Okamura-Oho Y."/>
            <person name="Suzuki H."/>
            <person name="Kawai J."/>
            <person name="Hayashizaki Y."/>
        </authorList>
    </citation>
    <scope>NUCLEOTIDE SEQUENCE [LARGE SCALE MRNA] OF 130-1313 (ISOFORM 4)</scope>
    <scope>NUCLEOTIDE SEQUENCE [LARGE SCALE MRNA] OF 883-1313 (ISOFORM 2)</scope>
    <source>
        <strain>C57BL/6J</strain>
        <tissue>Brain</tissue>
        <tissue>Brain cortex</tissue>
        <tissue>Spinal ganglion</tissue>
    </source>
</reference>
<reference key="3">
    <citation type="journal article" date="2004" name="DNA Res.">
        <title>Prediction of the coding sequences of mouse homologues of KIAA gene: IV. The complete nucleotide sequences of 500 mouse KIAA-homologous cDNAs identified by screening of terminal sequences of cDNA clones randomly sampled from size-fractionated libraries.</title>
        <authorList>
            <person name="Okazaki N."/>
            <person name="Kikuno R."/>
            <person name="Ohara R."/>
            <person name="Inamoto S."/>
            <person name="Koseki H."/>
            <person name="Hiraoka S."/>
            <person name="Saga Y."/>
            <person name="Seino S."/>
            <person name="Nishimura M."/>
            <person name="Kaisho T."/>
            <person name="Hoshino K."/>
            <person name="Kitamura H."/>
            <person name="Nagase T."/>
            <person name="Ohara O."/>
            <person name="Koga H."/>
        </authorList>
    </citation>
    <scope>NUCLEOTIDE SEQUENCE [LARGE SCALE MRNA] OF 676-1314 (ISOFORM 1)</scope>
    <source>
        <tissue>Brain</tissue>
    </source>
</reference>
<reference key="4">
    <citation type="journal article" date="2010" name="Cell">
        <title>A tissue-specific atlas of mouse protein phosphorylation and expression.</title>
        <authorList>
            <person name="Huttlin E.L."/>
            <person name="Jedrychowski M.P."/>
            <person name="Elias J.E."/>
            <person name="Goswami T."/>
            <person name="Rad R."/>
            <person name="Beausoleil S.A."/>
            <person name="Villen J."/>
            <person name="Haas W."/>
            <person name="Sowa M.E."/>
            <person name="Gygi S.P."/>
        </authorList>
    </citation>
    <scope>PHOSPHORYLATION [LARGE SCALE ANALYSIS] AT SER-13; SER-402; SER-405 AND SER-408</scope>
    <scope>IDENTIFICATION BY MASS SPECTROMETRY [LARGE SCALE ANALYSIS]</scope>
    <source>
        <tissue>Kidney</tissue>
        <tissue>Pancreas</tissue>
        <tissue>Testis</tissue>
    </source>
</reference>
<reference key="5">
    <citation type="journal article" date="2013" name="Mol. Cell">
        <title>SIRT5-mediated lysine desuccinylation impacts diverse metabolic pathways.</title>
        <authorList>
            <person name="Park J."/>
            <person name="Chen Y."/>
            <person name="Tishkoff D.X."/>
            <person name="Peng C."/>
            <person name="Tan M."/>
            <person name="Dai L."/>
            <person name="Xie Z."/>
            <person name="Zhang Y."/>
            <person name="Zwaans B.M."/>
            <person name="Skinner M.E."/>
            <person name="Lombard D.B."/>
            <person name="Zhao Y."/>
        </authorList>
    </citation>
    <scope>ACETYLATION [LARGE SCALE ANALYSIS] AT LYS-1036</scope>
    <scope>IDENTIFICATION BY MASS SPECTROMETRY [LARGE SCALE ANALYSIS]</scope>
    <source>
        <tissue>Embryonic fibroblast</tissue>
    </source>
</reference>
<sequence>MAEPRRVAFISLSPVRRREADFAGAEREPPRLEPQPYREPARAEPAPRADAQPPARDKPLPQREVSRAEPPMALQREPPRPEPPPPPLPLQTPPPRESASRAEPPPRPPKETVRLELVLKDPTDESCVEFSYPELLLCGEQRKKLVHTEDPFTDEHKERQEVEMLAKKFEMKYGGKARKHRKDRLQDLIDIGFGYDETDPFIDNSEAYDELVPASLTTKYGGFYINTGTLQFRQASDTEEDDFTDNQKHKPPKVPKIKEDDIEVKKRKRKEEGEKEKKPRKKVPKQLGVVALNSHKSEKKKKRYKDSLSLAAMIRKFQKEKDALKKESTPKVPVTPSSSSLPKPPCVTTALGDDIPDLGLNSADPDLPIFVSTNEHELFQEAENALEMLDDFDFDRLLDATSDGSPLSESGGENGNTTHPTFPSQVVPKVVPTLPEGLPVLLEKRIEDLRVAAKLFDEEGRKKFFTQDMNNILLDIELQLQELGPVIRSGVYSHLEAFVPCNKETLVKRLKKLHLNVQDDRLREPLQKLKLAVSNVMPEQLFKYQEDCQARSQAKCAKLQADEEREKNGSDDDDDEKPGKRVIGPRKKFHWDDTIRTLLCNLVEIKLGCYELEPNKSQSAEDYLKSFMETEVKPLWPKGWMQARMLFKESRSVHNHLTSAPAKKKVIPASKPKVKECSPKKDPKAPASVVASGGGPSTSSSTSIVASASSSSAPAQETICLDDSLDEDLSFPSASLDLVSEALAVINNGNKGPSVGSRLNVPTTKPRPGLREEKLASIMSKLPLATPKKLDSTQTAHSSSLIAGHTGPVPKKPQDLAHTGISSGLIAGSSIQNPKVSLEPLPARLLQQGLQRSSQIHASSSSQTHVSSSQAQAAASSHALGTSEAQDASSLTQVTKVHQHSAVQQNYVSPLQATISKSQTNPVVKLSNNPQLSCSSQLLKTSDKPLMYRLPLSTPSPGNGSQGPHPLVSRTAPSTTTSSNYLAKAMVSQISTQGFKSPFSMAASPKLAASPKPATSPKPLPSPKPSVSPKPSLSAKPSISTKQISKSNPAPKPAVCPSSSSPNTLVAQSSHSTSNNPVHKQPSGMNISRQSPTLNLLPSNRTSGLPTTKTLQAPSKLTNSSSTGTAGKNSLSGIPMNVPASRGSNLNSSGANRTSLSGGTGSGTQGATKPLSTPHRPTSASGSSVVTASVQSTAGASLLANASPLTLMTSPLSVTNQTVTPFGMLGGLVPVTMPFQFPLELLGFGTDTAGVTATSGSTSAALHHSLTQNLLKSLQPGAQHAAALPHSPLPAHLQQAFNDGGQSKGDTKLPRKPQ</sequence>
<gene>
    <name type="primary">Ubn2</name>
    <name type="synonym">Kiaa2030</name>
</gene>